<evidence type="ECO:0000255" key="1">
    <source>
        <dbReference type="HAMAP-Rule" id="MF_01318"/>
    </source>
</evidence>
<evidence type="ECO:0000305" key="2"/>
<reference key="1">
    <citation type="submission" date="2008-05" db="EMBL/GenBank/DDBJ databases">
        <title>Genome sequence of Helicobacter pylori from the remote Amazon: traces of Asian ancestry of the first Americans.</title>
        <authorList>
            <person name="Kersulyte D."/>
            <person name="Kalia A."/>
            <person name="Gilman R.H."/>
            <person name="Berg D.E."/>
        </authorList>
    </citation>
    <scope>NUCLEOTIDE SEQUENCE [LARGE SCALE GENOMIC DNA]</scope>
    <source>
        <strain>Shi470</strain>
    </source>
</reference>
<keyword id="KW-0678">Repressor</keyword>
<keyword id="KW-0687">Ribonucleoprotein</keyword>
<keyword id="KW-0689">Ribosomal protein</keyword>
<keyword id="KW-0694">RNA-binding</keyword>
<keyword id="KW-0699">rRNA-binding</keyword>
<keyword id="KW-0810">Translation regulation</keyword>
<keyword id="KW-0820">tRNA-binding</keyword>
<protein>
    <recommendedName>
        <fullName evidence="1">Large ribosomal subunit protein uL1</fullName>
    </recommendedName>
    <alternativeName>
        <fullName evidence="2">50S ribosomal protein L1</fullName>
    </alternativeName>
</protein>
<name>RL1_HELPS</name>
<proteinExistence type="inferred from homology"/>
<sequence>MAKKVFKRLEKLFSKIQNDKAYGVEQGVEVVKSLASAKFDETVEVALRLGVDPRHADQMVRGAVVLPHGTGKKVRVAVFAKDIKQDEAKNAGADVVGGDDLAEEIKNGRIDFDMVIATPDMMAVVGKVGRILGPKGLMPNPKTGTVTMDIAKAVSNAKSGQVNFRVDKKGNVHAPIGKASFPEEKIKENMLELVKTINRLKPSSAKGKYIRNATLSLTMSPSVNLDAQELMDIK</sequence>
<accession>B2UUW3</accession>
<dbReference type="EMBL" id="CP001072">
    <property type="protein sequence ID" value="ACD48645.1"/>
    <property type="molecule type" value="Genomic_DNA"/>
</dbReference>
<dbReference type="RefSeq" id="WP_001085841.1">
    <property type="nucleotide sequence ID" value="NC_010698.2"/>
</dbReference>
<dbReference type="SMR" id="B2UUW3"/>
<dbReference type="KEGG" id="hps:HPSH_06215"/>
<dbReference type="HOGENOM" id="CLU_062853_0_0_7"/>
<dbReference type="GO" id="GO:0022625">
    <property type="term" value="C:cytosolic large ribosomal subunit"/>
    <property type="evidence" value="ECO:0007669"/>
    <property type="project" value="TreeGrafter"/>
</dbReference>
<dbReference type="GO" id="GO:0019843">
    <property type="term" value="F:rRNA binding"/>
    <property type="evidence" value="ECO:0007669"/>
    <property type="project" value="UniProtKB-UniRule"/>
</dbReference>
<dbReference type="GO" id="GO:0003735">
    <property type="term" value="F:structural constituent of ribosome"/>
    <property type="evidence" value="ECO:0007669"/>
    <property type="project" value="InterPro"/>
</dbReference>
<dbReference type="GO" id="GO:0000049">
    <property type="term" value="F:tRNA binding"/>
    <property type="evidence" value="ECO:0007669"/>
    <property type="project" value="UniProtKB-KW"/>
</dbReference>
<dbReference type="GO" id="GO:0006417">
    <property type="term" value="P:regulation of translation"/>
    <property type="evidence" value="ECO:0007669"/>
    <property type="project" value="UniProtKB-KW"/>
</dbReference>
<dbReference type="GO" id="GO:0006412">
    <property type="term" value="P:translation"/>
    <property type="evidence" value="ECO:0007669"/>
    <property type="project" value="UniProtKB-UniRule"/>
</dbReference>
<dbReference type="CDD" id="cd00403">
    <property type="entry name" value="Ribosomal_L1"/>
    <property type="match status" value="1"/>
</dbReference>
<dbReference type="FunFam" id="3.40.50.790:FF:000001">
    <property type="entry name" value="50S ribosomal protein L1"/>
    <property type="match status" value="1"/>
</dbReference>
<dbReference type="Gene3D" id="3.30.190.20">
    <property type="match status" value="1"/>
</dbReference>
<dbReference type="Gene3D" id="3.40.50.790">
    <property type="match status" value="1"/>
</dbReference>
<dbReference type="HAMAP" id="MF_01318_B">
    <property type="entry name" value="Ribosomal_uL1_B"/>
    <property type="match status" value="1"/>
</dbReference>
<dbReference type="InterPro" id="IPR005878">
    <property type="entry name" value="Ribosom_uL1_bac-type"/>
</dbReference>
<dbReference type="InterPro" id="IPR002143">
    <property type="entry name" value="Ribosomal_uL1"/>
</dbReference>
<dbReference type="InterPro" id="IPR023674">
    <property type="entry name" value="Ribosomal_uL1-like"/>
</dbReference>
<dbReference type="InterPro" id="IPR028364">
    <property type="entry name" value="Ribosomal_uL1/biogenesis"/>
</dbReference>
<dbReference type="InterPro" id="IPR016095">
    <property type="entry name" value="Ribosomal_uL1_3-a/b-sand"/>
</dbReference>
<dbReference type="InterPro" id="IPR023673">
    <property type="entry name" value="Ribosomal_uL1_CS"/>
</dbReference>
<dbReference type="NCBIfam" id="TIGR01169">
    <property type="entry name" value="rplA_bact"/>
    <property type="match status" value="1"/>
</dbReference>
<dbReference type="PANTHER" id="PTHR36427">
    <property type="entry name" value="54S RIBOSOMAL PROTEIN L1, MITOCHONDRIAL"/>
    <property type="match status" value="1"/>
</dbReference>
<dbReference type="PANTHER" id="PTHR36427:SF3">
    <property type="entry name" value="LARGE RIBOSOMAL SUBUNIT PROTEIN UL1M"/>
    <property type="match status" value="1"/>
</dbReference>
<dbReference type="Pfam" id="PF00687">
    <property type="entry name" value="Ribosomal_L1"/>
    <property type="match status" value="1"/>
</dbReference>
<dbReference type="PIRSF" id="PIRSF002155">
    <property type="entry name" value="Ribosomal_L1"/>
    <property type="match status" value="1"/>
</dbReference>
<dbReference type="SUPFAM" id="SSF56808">
    <property type="entry name" value="Ribosomal protein L1"/>
    <property type="match status" value="1"/>
</dbReference>
<dbReference type="PROSITE" id="PS01199">
    <property type="entry name" value="RIBOSOMAL_L1"/>
    <property type="match status" value="1"/>
</dbReference>
<feature type="chain" id="PRO_1000141414" description="Large ribosomal subunit protein uL1">
    <location>
        <begin position="1"/>
        <end position="234"/>
    </location>
</feature>
<organism>
    <name type="scientific">Helicobacter pylori (strain Shi470)</name>
    <dbReference type="NCBI Taxonomy" id="512562"/>
    <lineage>
        <taxon>Bacteria</taxon>
        <taxon>Pseudomonadati</taxon>
        <taxon>Campylobacterota</taxon>
        <taxon>Epsilonproteobacteria</taxon>
        <taxon>Campylobacterales</taxon>
        <taxon>Helicobacteraceae</taxon>
        <taxon>Helicobacter</taxon>
    </lineage>
</organism>
<gene>
    <name evidence="1" type="primary">rplA</name>
    <name type="ordered locus">HPSH_06215</name>
</gene>
<comment type="function">
    <text evidence="1">Binds directly to 23S rRNA. The L1 stalk is quite mobile in the ribosome, and is involved in E site tRNA release.</text>
</comment>
<comment type="function">
    <text evidence="1">Protein L1 is also a translational repressor protein, it controls the translation of the L11 operon by binding to its mRNA.</text>
</comment>
<comment type="subunit">
    <text evidence="1">Part of the 50S ribosomal subunit.</text>
</comment>
<comment type="similarity">
    <text evidence="1">Belongs to the universal ribosomal protein uL1 family.</text>
</comment>